<sequence length="361" mass="40490">MRKFIIASGGTGGHFYPGFSLGKELRKRSYEVLFVVRKEDAAIKTLTKNNFNYKEINFTGFPRSANPIRHIIFCYKFIVSFWQTLGIINAFKPDVCVGMGGYLSFPVIVWAKIKGIKSAVHDSNTKIGLANKICAKFTNIFLLGLPTSDNIKNTKLVGTPIREEFGLDFNREEVLKSRGLNPNLATVLIFGGSQGSKKLNMAISKTAKKIVKKNDTVQFVHISGDKGYDKLRQEYRGCKNIRLFAYCHDIYFLMRAADFVVCRSGASTIAELYACRKPAVLIPFPYAADNHQYYNGMLLKKAGCAELFVEGDNLAPKLHEYIAGISKNKNILEFMERGYEMLELPDPLKSAEIIADTVESL</sequence>
<organism>
    <name type="scientific">Elusimicrobium minutum (strain Pei191)</name>
    <dbReference type="NCBI Taxonomy" id="445932"/>
    <lineage>
        <taxon>Bacteria</taxon>
        <taxon>Pseudomonadati</taxon>
        <taxon>Elusimicrobiota</taxon>
        <taxon>Elusimicrobia</taxon>
        <taxon>Elusimicrobiales</taxon>
        <taxon>Elusimicrobiaceae</taxon>
        <taxon>Elusimicrobium</taxon>
    </lineage>
</organism>
<reference key="1">
    <citation type="journal article" date="2009" name="Appl. Environ. Microbiol.">
        <title>Genomic analysis of 'Elusimicrobium minutum,' the first cultivated representative of the phylum 'Elusimicrobia' (formerly termite group 1).</title>
        <authorList>
            <person name="Herlemann D.P.R."/>
            <person name="Geissinger O."/>
            <person name="Ikeda-Ohtsubo W."/>
            <person name="Kunin V."/>
            <person name="Sun H."/>
            <person name="Lapidus A."/>
            <person name="Hugenholtz P."/>
            <person name="Brune A."/>
        </authorList>
    </citation>
    <scope>NUCLEOTIDE SEQUENCE [LARGE SCALE GENOMIC DNA]</scope>
    <source>
        <strain>Pei191</strain>
    </source>
</reference>
<gene>
    <name evidence="1" type="primary">murG</name>
    <name type="ordered locus">Emin_1250</name>
</gene>
<name>MURG_ELUMP</name>
<feature type="chain" id="PRO_1000090431" description="UDP-N-acetylglucosamine--N-acetylmuramyl-(pentapeptide) pyrophosphoryl-undecaprenol N-acetylglucosamine transferase">
    <location>
        <begin position="1"/>
        <end position="361"/>
    </location>
</feature>
<feature type="binding site" evidence="1">
    <location>
        <begin position="11"/>
        <end position="13"/>
    </location>
    <ligand>
        <name>UDP-N-acetyl-alpha-D-glucosamine</name>
        <dbReference type="ChEBI" id="CHEBI:57705"/>
    </ligand>
</feature>
<feature type="binding site" evidence="1">
    <location>
        <position position="124"/>
    </location>
    <ligand>
        <name>UDP-N-acetyl-alpha-D-glucosamine</name>
        <dbReference type="ChEBI" id="CHEBI:57705"/>
    </ligand>
</feature>
<feature type="binding site" evidence="1">
    <location>
        <position position="162"/>
    </location>
    <ligand>
        <name>UDP-N-acetyl-alpha-D-glucosamine</name>
        <dbReference type="ChEBI" id="CHEBI:57705"/>
    </ligand>
</feature>
<feature type="binding site" evidence="1">
    <location>
        <position position="193"/>
    </location>
    <ligand>
        <name>UDP-N-acetyl-alpha-D-glucosamine</name>
        <dbReference type="ChEBI" id="CHEBI:57705"/>
    </ligand>
</feature>
<feature type="binding site" evidence="1">
    <location>
        <position position="292"/>
    </location>
    <ligand>
        <name>UDP-N-acetyl-alpha-D-glucosamine</name>
        <dbReference type="ChEBI" id="CHEBI:57705"/>
    </ligand>
</feature>
<evidence type="ECO:0000255" key="1">
    <source>
        <dbReference type="HAMAP-Rule" id="MF_00033"/>
    </source>
</evidence>
<accession>B2KE54</accession>
<proteinExistence type="inferred from homology"/>
<protein>
    <recommendedName>
        <fullName evidence="1">UDP-N-acetylglucosamine--N-acetylmuramyl-(pentapeptide) pyrophosphoryl-undecaprenol N-acetylglucosamine transferase</fullName>
        <ecNumber evidence="1">2.4.1.227</ecNumber>
    </recommendedName>
    <alternativeName>
        <fullName evidence="1">Undecaprenyl-PP-MurNAc-pentapeptide-UDPGlcNAc GlcNAc transferase</fullName>
    </alternativeName>
</protein>
<comment type="function">
    <text evidence="1">Cell wall formation. Catalyzes the transfer of a GlcNAc subunit on undecaprenyl-pyrophosphoryl-MurNAc-pentapeptide (lipid intermediate I) to form undecaprenyl-pyrophosphoryl-MurNAc-(pentapeptide)GlcNAc (lipid intermediate II).</text>
</comment>
<comment type="catalytic activity">
    <reaction evidence="1">
        <text>di-trans,octa-cis-undecaprenyl diphospho-N-acetyl-alpha-D-muramoyl-L-alanyl-D-glutamyl-meso-2,6-diaminopimeloyl-D-alanyl-D-alanine + UDP-N-acetyl-alpha-D-glucosamine = di-trans,octa-cis-undecaprenyl diphospho-[N-acetyl-alpha-D-glucosaminyl-(1-&gt;4)]-N-acetyl-alpha-D-muramoyl-L-alanyl-D-glutamyl-meso-2,6-diaminopimeloyl-D-alanyl-D-alanine + UDP + H(+)</text>
        <dbReference type="Rhea" id="RHEA:31227"/>
        <dbReference type="ChEBI" id="CHEBI:15378"/>
        <dbReference type="ChEBI" id="CHEBI:57705"/>
        <dbReference type="ChEBI" id="CHEBI:58223"/>
        <dbReference type="ChEBI" id="CHEBI:61387"/>
        <dbReference type="ChEBI" id="CHEBI:61388"/>
        <dbReference type="EC" id="2.4.1.227"/>
    </reaction>
</comment>
<comment type="pathway">
    <text evidence="1">Cell wall biogenesis; peptidoglycan biosynthesis.</text>
</comment>
<comment type="subcellular location">
    <subcellularLocation>
        <location evidence="1">Cell inner membrane</location>
        <topology evidence="1">Peripheral membrane protein</topology>
        <orientation evidence="1">Cytoplasmic side</orientation>
    </subcellularLocation>
</comment>
<comment type="similarity">
    <text evidence="1">Belongs to the glycosyltransferase 28 family. MurG subfamily.</text>
</comment>
<keyword id="KW-0131">Cell cycle</keyword>
<keyword id="KW-0132">Cell division</keyword>
<keyword id="KW-0997">Cell inner membrane</keyword>
<keyword id="KW-1003">Cell membrane</keyword>
<keyword id="KW-0133">Cell shape</keyword>
<keyword id="KW-0961">Cell wall biogenesis/degradation</keyword>
<keyword id="KW-0328">Glycosyltransferase</keyword>
<keyword id="KW-0472">Membrane</keyword>
<keyword id="KW-0573">Peptidoglycan synthesis</keyword>
<keyword id="KW-1185">Reference proteome</keyword>
<keyword id="KW-0808">Transferase</keyword>
<dbReference type="EC" id="2.4.1.227" evidence="1"/>
<dbReference type="EMBL" id="CP001055">
    <property type="protein sequence ID" value="ACC98800.1"/>
    <property type="molecule type" value="Genomic_DNA"/>
</dbReference>
<dbReference type="RefSeq" id="WP_012415415.1">
    <property type="nucleotide sequence ID" value="NC_010644.1"/>
</dbReference>
<dbReference type="SMR" id="B2KE54"/>
<dbReference type="STRING" id="445932.Emin_1250"/>
<dbReference type="CAZy" id="GT28">
    <property type="family name" value="Glycosyltransferase Family 28"/>
</dbReference>
<dbReference type="KEGG" id="emi:Emin_1250"/>
<dbReference type="HOGENOM" id="CLU_037404_0_1_0"/>
<dbReference type="OrthoDB" id="9808936at2"/>
<dbReference type="UniPathway" id="UPA00219"/>
<dbReference type="Proteomes" id="UP000001029">
    <property type="component" value="Chromosome"/>
</dbReference>
<dbReference type="GO" id="GO:0005886">
    <property type="term" value="C:plasma membrane"/>
    <property type="evidence" value="ECO:0007669"/>
    <property type="project" value="UniProtKB-SubCell"/>
</dbReference>
<dbReference type="GO" id="GO:0051991">
    <property type="term" value="F:UDP-N-acetyl-D-glucosamine:N-acetylmuramoyl-L-alanyl-D-glutamyl-meso-2,6-diaminopimelyl-D-alanyl-D-alanine-diphosphoundecaprenol 4-beta-N-acetylglucosaminlytransferase activity"/>
    <property type="evidence" value="ECO:0007669"/>
    <property type="project" value="RHEA"/>
</dbReference>
<dbReference type="GO" id="GO:0050511">
    <property type="term" value="F:undecaprenyldiphospho-muramoylpentapeptide beta-N-acetylglucosaminyltransferase activity"/>
    <property type="evidence" value="ECO:0007669"/>
    <property type="project" value="UniProtKB-UniRule"/>
</dbReference>
<dbReference type="GO" id="GO:0005975">
    <property type="term" value="P:carbohydrate metabolic process"/>
    <property type="evidence" value="ECO:0007669"/>
    <property type="project" value="InterPro"/>
</dbReference>
<dbReference type="GO" id="GO:0051301">
    <property type="term" value="P:cell division"/>
    <property type="evidence" value="ECO:0007669"/>
    <property type="project" value="UniProtKB-KW"/>
</dbReference>
<dbReference type="GO" id="GO:0071555">
    <property type="term" value="P:cell wall organization"/>
    <property type="evidence" value="ECO:0007669"/>
    <property type="project" value="UniProtKB-KW"/>
</dbReference>
<dbReference type="GO" id="GO:0030259">
    <property type="term" value="P:lipid glycosylation"/>
    <property type="evidence" value="ECO:0007669"/>
    <property type="project" value="UniProtKB-UniRule"/>
</dbReference>
<dbReference type="GO" id="GO:0009252">
    <property type="term" value="P:peptidoglycan biosynthetic process"/>
    <property type="evidence" value="ECO:0007669"/>
    <property type="project" value="UniProtKB-UniRule"/>
</dbReference>
<dbReference type="GO" id="GO:0008360">
    <property type="term" value="P:regulation of cell shape"/>
    <property type="evidence" value="ECO:0007669"/>
    <property type="project" value="UniProtKB-KW"/>
</dbReference>
<dbReference type="CDD" id="cd03785">
    <property type="entry name" value="GT28_MurG"/>
    <property type="match status" value="1"/>
</dbReference>
<dbReference type="Gene3D" id="3.40.50.2000">
    <property type="entry name" value="Glycogen Phosphorylase B"/>
    <property type="match status" value="2"/>
</dbReference>
<dbReference type="HAMAP" id="MF_00033">
    <property type="entry name" value="MurG"/>
    <property type="match status" value="1"/>
</dbReference>
<dbReference type="InterPro" id="IPR006009">
    <property type="entry name" value="GlcNAc_MurG"/>
</dbReference>
<dbReference type="InterPro" id="IPR007235">
    <property type="entry name" value="Glyco_trans_28_C"/>
</dbReference>
<dbReference type="InterPro" id="IPR004276">
    <property type="entry name" value="GlycoTrans_28_N"/>
</dbReference>
<dbReference type="PANTHER" id="PTHR21015:SF22">
    <property type="entry name" value="GLYCOSYLTRANSFERASE"/>
    <property type="match status" value="1"/>
</dbReference>
<dbReference type="PANTHER" id="PTHR21015">
    <property type="entry name" value="UDP-N-ACETYLGLUCOSAMINE--N-ACETYLMURAMYL-(PENTAPEPTIDE) PYROPHOSPHORYL-UNDECAPRENOL N-ACETYLGLUCOSAMINE TRANSFERASE 1"/>
    <property type="match status" value="1"/>
</dbReference>
<dbReference type="Pfam" id="PF04101">
    <property type="entry name" value="Glyco_tran_28_C"/>
    <property type="match status" value="1"/>
</dbReference>
<dbReference type="Pfam" id="PF03033">
    <property type="entry name" value="Glyco_transf_28"/>
    <property type="match status" value="1"/>
</dbReference>
<dbReference type="SUPFAM" id="SSF53756">
    <property type="entry name" value="UDP-Glycosyltransferase/glycogen phosphorylase"/>
    <property type="match status" value="1"/>
</dbReference>